<feature type="chain" id="PRO_1000023632" description="Elongation factor P--(R)-beta-lysine ligase">
    <location>
        <begin position="1"/>
        <end position="325"/>
    </location>
</feature>
<feature type="binding site" evidence="1">
    <location>
        <begin position="76"/>
        <end position="78"/>
    </location>
    <ligand>
        <name>substrate</name>
    </ligand>
</feature>
<feature type="binding site" evidence="1">
    <location>
        <begin position="100"/>
        <end position="102"/>
    </location>
    <ligand>
        <name>ATP</name>
        <dbReference type="ChEBI" id="CHEBI:30616"/>
    </ligand>
</feature>
<feature type="binding site" evidence="1">
    <location>
        <position position="109"/>
    </location>
    <ligand>
        <name>ATP</name>
        <dbReference type="ChEBI" id="CHEBI:30616"/>
    </ligand>
</feature>
<feature type="binding site" evidence="1">
    <location>
        <position position="118"/>
    </location>
    <ligand>
        <name>substrate</name>
    </ligand>
</feature>
<feature type="binding site" evidence="1">
    <location>
        <begin position="244"/>
        <end position="245"/>
    </location>
    <ligand>
        <name>ATP</name>
        <dbReference type="ChEBI" id="CHEBI:30616"/>
    </ligand>
</feature>
<feature type="binding site" evidence="1">
    <location>
        <position position="251"/>
    </location>
    <ligand>
        <name>substrate</name>
    </ligand>
</feature>
<feature type="binding site" evidence="1">
    <location>
        <position position="300"/>
    </location>
    <ligand>
        <name>ATP</name>
        <dbReference type="ChEBI" id="CHEBI:30616"/>
    </ligand>
</feature>
<name>EPMA_SODGM</name>
<gene>
    <name evidence="1" type="primary">epmA</name>
    <name type="synonym">yjeA</name>
    <name type="ordered locus">SG0310</name>
</gene>
<accession>Q2NW90</accession>
<organism>
    <name type="scientific">Sodalis glossinidius (strain morsitans)</name>
    <dbReference type="NCBI Taxonomy" id="343509"/>
    <lineage>
        <taxon>Bacteria</taxon>
        <taxon>Pseudomonadati</taxon>
        <taxon>Pseudomonadota</taxon>
        <taxon>Gammaproteobacteria</taxon>
        <taxon>Enterobacterales</taxon>
        <taxon>Bruguierivoracaceae</taxon>
        <taxon>Sodalis</taxon>
    </lineage>
</organism>
<sequence>MSDSASWQPSAPIANLLKRAAIVGQIRRFFSDRGLLEVETPAMSQATVTDIHLVPFQTCFIGPGAAGGMPLYLMTSPEYHMKRLLAAGSGPLFQLCRSFRNEEAGRYHNPEFTMLEWYRPHYDMYRLMNEVDDLLQQILDCDSAETLSYQQVFTRHVGIDPLSADKAQLYDAAVKWDLGEAASVEDDRDTLLQLLFAMVVEPNIGHDKPAFVYHFPASQAALAEISTEDHRVADRFEAYFKGIELANGFCELTDAREQRQRFEQDNRKRVAMKLSEQPIDENLLAALAQGMPECSGVALGVDRLVMLALKADRLSDVIAFAVERA</sequence>
<protein>
    <recommendedName>
        <fullName evidence="1">Elongation factor P--(R)-beta-lysine ligase</fullName>
        <shortName evidence="1">EF-P--(R)-beta-lysine ligase</shortName>
        <ecNumber evidence="1">6.3.2.-</ecNumber>
    </recommendedName>
    <alternativeName>
        <fullName evidence="1">EF-P post-translational modification enzyme A</fullName>
    </alternativeName>
    <alternativeName>
        <fullName evidence="1">EF-P-lysine lysyltransferase</fullName>
    </alternativeName>
</protein>
<keyword id="KW-0067">ATP-binding</keyword>
<keyword id="KW-0436">Ligase</keyword>
<keyword id="KW-0547">Nucleotide-binding</keyword>
<proteinExistence type="inferred from homology"/>
<dbReference type="EC" id="6.3.2.-" evidence="1"/>
<dbReference type="EMBL" id="AP008232">
    <property type="protein sequence ID" value="BAE73585.1"/>
    <property type="molecule type" value="Genomic_DNA"/>
</dbReference>
<dbReference type="RefSeq" id="WP_011410173.1">
    <property type="nucleotide sequence ID" value="NC_007712.1"/>
</dbReference>
<dbReference type="SMR" id="Q2NW90"/>
<dbReference type="STRING" id="343509.SG0310"/>
<dbReference type="KEGG" id="sgl:SG0310"/>
<dbReference type="eggNOG" id="COG2269">
    <property type="taxonomic scope" value="Bacteria"/>
</dbReference>
<dbReference type="HOGENOM" id="CLU_008255_1_1_6"/>
<dbReference type="OrthoDB" id="9802326at2"/>
<dbReference type="BioCyc" id="SGLO343509:SGP1_RS02860-MONOMER"/>
<dbReference type="Proteomes" id="UP000001932">
    <property type="component" value="Chromosome"/>
</dbReference>
<dbReference type="GO" id="GO:0005829">
    <property type="term" value="C:cytosol"/>
    <property type="evidence" value="ECO:0007669"/>
    <property type="project" value="TreeGrafter"/>
</dbReference>
<dbReference type="GO" id="GO:0016880">
    <property type="term" value="F:acid-ammonia (or amide) ligase activity"/>
    <property type="evidence" value="ECO:0007669"/>
    <property type="project" value="UniProtKB-UniRule"/>
</dbReference>
<dbReference type="GO" id="GO:0005524">
    <property type="term" value="F:ATP binding"/>
    <property type="evidence" value="ECO:0007669"/>
    <property type="project" value="UniProtKB-UniRule"/>
</dbReference>
<dbReference type="GO" id="GO:0004824">
    <property type="term" value="F:lysine-tRNA ligase activity"/>
    <property type="evidence" value="ECO:0007669"/>
    <property type="project" value="InterPro"/>
</dbReference>
<dbReference type="GO" id="GO:0000049">
    <property type="term" value="F:tRNA binding"/>
    <property type="evidence" value="ECO:0007669"/>
    <property type="project" value="TreeGrafter"/>
</dbReference>
<dbReference type="GO" id="GO:0006430">
    <property type="term" value="P:lysyl-tRNA aminoacylation"/>
    <property type="evidence" value="ECO:0007669"/>
    <property type="project" value="InterPro"/>
</dbReference>
<dbReference type="FunFam" id="3.30.930.10:FF:000017">
    <property type="entry name" value="Elongation factor P--(R)-beta-lysine ligase"/>
    <property type="match status" value="1"/>
</dbReference>
<dbReference type="Gene3D" id="3.30.930.10">
    <property type="entry name" value="Bira Bifunctional Protein, Domain 2"/>
    <property type="match status" value="1"/>
</dbReference>
<dbReference type="HAMAP" id="MF_00174">
    <property type="entry name" value="EF_P_modif_A"/>
    <property type="match status" value="1"/>
</dbReference>
<dbReference type="InterPro" id="IPR004364">
    <property type="entry name" value="Aa-tRNA-synt_II"/>
</dbReference>
<dbReference type="InterPro" id="IPR006195">
    <property type="entry name" value="aa-tRNA-synth_II"/>
</dbReference>
<dbReference type="InterPro" id="IPR045864">
    <property type="entry name" value="aa-tRNA-synth_II/BPL/LPL"/>
</dbReference>
<dbReference type="InterPro" id="IPR004525">
    <property type="entry name" value="EpmA"/>
</dbReference>
<dbReference type="InterPro" id="IPR018149">
    <property type="entry name" value="Lys-tRNA-synth_II_C"/>
</dbReference>
<dbReference type="NCBIfam" id="TIGR00462">
    <property type="entry name" value="genX"/>
    <property type="match status" value="1"/>
</dbReference>
<dbReference type="NCBIfam" id="NF006828">
    <property type="entry name" value="PRK09350.1"/>
    <property type="match status" value="1"/>
</dbReference>
<dbReference type="PANTHER" id="PTHR42918:SF6">
    <property type="entry name" value="ELONGATION FACTOR P--(R)-BETA-LYSINE LIGASE"/>
    <property type="match status" value="1"/>
</dbReference>
<dbReference type="PANTHER" id="PTHR42918">
    <property type="entry name" value="LYSYL-TRNA SYNTHETASE"/>
    <property type="match status" value="1"/>
</dbReference>
<dbReference type="Pfam" id="PF00152">
    <property type="entry name" value="tRNA-synt_2"/>
    <property type="match status" value="1"/>
</dbReference>
<dbReference type="PRINTS" id="PR00982">
    <property type="entry name" value="TRNASYNTHLYS"/>
</dbReference>
<dbReference type="SUPFAM" id="SSF55681">
    <property type="entry name" value="Class II aaRS and biotin synthetases"/>
    <property type="match status" value="1"/>
</dbReference>
<dbReference type="PROSITE" id="PS50862">
    <property type="entry name" value="AA_TRNA_LIGASE_II"/>
    <property type="match status" value="1"/>
</dbReference>
<evidence type="ECO:0000255" key="1">
    <source>
        <dbReference type="HAMAP-Rule" id="MF_00174"/>
    </source>
</evidence>
<reference key="1">
    <citation type="journal article" date="2006" name="Genome Res.">
        <title>Massive genome erosion and functional adaptations provide insights into the symbiotic lifestyle of Sodalis glossinidius in the tsetse host.</title>
        <authorList>
            <person name="Toh H."/>
            <person name="Weiss B.L."/>
            <person name="Perkin S.A.H."/>
            <person name="Yamashita A."/>
            <person name="Oshima K."/>
            <person name="Hattori M."/>
            <person name="Aksoy S."/>
        </authorList>
    </citation>
    <scope>NUCLEOTIDE SEQUENCE [LARGE SCALE GENOMIC DNA]</scope>
    <source>
        <strain>morsitans</strain>
    </source>
</reference>
<comment type="function">
    <text evidence="1">With EpmB is involved in the beta-lysylation step of the post-translational modification of translation elongation factor P (EF-P). Catalyzes the ATP-dependent activation of (R)-beta-lysine produced by EpmB, forming a lysyl-adenylate, from which the beta-lysyl moiety is then transferred to the epsilon-amino group of a conserved specific lysine residue in EF-P.</text>
</comment>
<comment type="catalytic activity">
    <reaction evidence="1">
        <text>D-beta-lysine + L-lysyl-[protein] + ATP = N(6)-((3R)-3,6-diaminohexanoyl)-L-lysyl-[protein] + AMP + diphosphate + H(+)</text>
        <dbReference type="Rhea" id="RHEA:83435"/>
        <dbReference type="Rhea" id="RHEA-COMP:9752"/>
        <dbReference type="Rhea" id="RHEA-COMP:20131"/>
        <dbReference type="ChEBI" id="CHEBI:15378"/>
        <dbReference type="ChEBI" id="CHEBI:29969"/>
        <dbReference type="ChEBI" id="CHEBI:30616"/>
        <dbReference type="ChEBI" id="CHEBI:33019"/>
        <dbReference type="ChEBI" id="CHEBI:84138"/>
        <dbReference type="ChEBI" id="CHEBI:156053"/>
        <dbReference type="ChEBI" id="CHEBI:456215"/>
    </reaction>
    <physiologicalReaction direction="left-to-right" evidence="1">
        <dbReference type="Rhea" id="RHEA:83436"/>
    </physiologicalReaction>
</comment>
<comment type="subunit">
    <text evidence="1">Homodimer.</text>
</comment>
<comment type="similarity">
    <text evidence="1">Belongs to the class-II aminoacyl-tRNA synthetase family. EpmA subfamily.</text>
</comment>